<sequence length="98" mass="10852">MAPKKTTKKGGPQKRPSAEKRILTAQKRYLINQSFKSKAKTMMKKFEAALKAGDQSSITSGLQLVYSVADKAVKRGIFKNNKAARIKSRATLRANVKI</sequence>
<gene>
    <name evidence="1" type="primary">rpsT</name>
    <name type="ordered locus">CCA_01003</name>
</gene>
<proteinExistence type="inferred from homology"/>
<evidence type="ECO:0000255" key="1">
    <source>
        <dbReference type="HAMAP-Rule" id="MF_00500"/>
    </source>
</evidence>
<evidence type="ECO:0000256" key="2">
    <source>
        <dbReference type="SAM" id="MobiDB-lite"/>
    </source>
</evidence>
<evidence type="ECO:0000305" key="3"/>
<name>RS20_CHLCV</name>
<protein>
    <recommendedName>
        <fullName evidence="1">Small ribosomal subunit protein bS20</fullName>
    </recommendedName>
    <alternativeName>
        <fullName evidence="3">30S ribosomal protein S20</fullName>
    </alternativeName>
</protein>
<keyword id="KW-0687">Ribonucleoprotein</keyword>
<keyword id="KW-0689">Ribosomal protein</keyword>
<keyword id="KW-0694">RNA-binding</keyword>
<keyword id="KW-0699">rRNA-binding</keyword>
<feature type="chain" id="PRO_0000167943" description="Small ribosomal subunit protein bS20">
    <location>
        <begin position="1"/>
        <end position="98"/>
    </location>
</feature>
<feature type="region of interest" description="Disordered" evidence="2">
    <location>
        <begin position="1"/>
        <end position="20"/>
    </location>
</feature>
<feature type="compositionally biased region" description="Basic residues" evidence="2">
    <location>
        <begin position="1"/>
        <end position="12"/>
    </location>
</feature>
<organism>
    <name type="scientific">Chlamydia caviae (strain ATCC VR-813 / DSM 19441 / 03DC25 / GPIC)</name>
    <name type="common">Chlamydophila caviae</name>
    <dbReference type="NCBI Taxonomy" id="227941"/>
    <lineage>
        <taxon>Bacteria</taxon>
        <taxon>Pseudomonadati</taxon>
        <taxon>Chlamydiota</taxon>
        <taxon>Chlamydiia</taxon>
        <taxon>Chlamydiales</taxon>
        <taxon>Chlamydiaceae</taxon>
        <taxon>Chlamydia/Chlamydophila group</taxon>
        <taxon>Chlamydia</taxon>
    </lineage>
</organism>
<dbReference type="EMBL" id="AE015925">
    <property type="protein sequence ID" value="AAP05742.1"/>
    <property type="molecule type" value="Genomic_DNA"/>
</dbReference>
<dbReference type="RefSeq" id="WP_011006955.1">
    <property type="nucleotide sequence ID" value="NC_003361.3"/>
</dbReference>
<dbReference type="SMR" id="Q821D9"/>
<dbReference type="STRING" id="227941.CCA_01003"/>
<dbReference type="KEGG" id="cca:CCA_01003"/>
<dbReference type="eggNOG" id="COG0268">
    <property type="taxonomic scope" value="Bacteria"/>
</dbReference>
<dbReference type="HOGENOM" id="CLU_160655_2_0_0"/>
<dbReference type="OrthoDB" id="21589at2"/>
<dbReference type="Proteomes" id="UP000002193">
    <property type="component" value="Chromosome"/>
</dbReference>
<dbReference type="GO" id="GO:0005829">
    <property type="term" value="C:cytosol"/>
    <property type="evidence" value="ECO:0007669"/>
    <property type="project" value="TreeGrafter"/>
</dbReference>
<dbReference type="GO" id="GO:0015935">
    <property type="term" value="C:small ribosomal subunit"/>
    <property type="evidence" value="ECO:0007669"/>
    <property type="project" value="TreeGrafter"/>
</dbReference>
<dbReference type="GO" id="GO:0070181">
    <property type="term" value="F:small ribosomal subunit rRNA binding"/>
    <property type="evidence" value="ECO:0007669"/>
    <property type="project" value="TreeGrafter"/>
</dbReference>
<dbReference type="GO" id="GO:0003735">
    <property type="term" value="F:structural constituent of ribosome"/>
    <property type="evidence" value="ECO:0007669"/>
    <property type="project" value="InterPro"/>
</dbReference>
<dbReference type="GO" id="GO:0006412">
    <property type="term" value="P:translation"/>
    <property type="evidence" value="ECO:0007669"/>
    <property type="project" value="UniProtKB-UniRule"/>
</dbReference>
<dbReference type="Gene3D" id="1.20.58.110">
    <property type="entry name" value="Ribosomal protein S20"/>
    <property type="match status" value="1"/>
</dbReference>
<dbReference type="HAMAP" id="MF_00500">
    <property type="entry name" value="Ribosomal_bS20"/>
    <property type="match status" value="1"/>
</dbReference>
<dbReference type="InterPro" id="IPR002583">
    <property type="entry name" value="Ribosomal_bS20"/>
</dbReference>
<dbReference type="InterPro" id="IPR036510">
    <property type="entry name" value="Ribosomal_bS20_sf"/>
</dbReference>
<dbReference type="NCBIfam" id="TIGR00029">
    <property type="entry name" value="S20"/>
    <property type="match status" value="1"/>
</dbReference>
<dbReference type="PANTHER" id="PTHR33398">
    <property type="entry name" value="30S RIBOSOMAL PROTEIN S20"/>
    <property type="match status" value="1"/>
</dbReference>
<dbReference type="PANTHER" id="PTHR33398:SF1">
    <property type="entry name" value="SMALL RIBOSOMAL SUBUNIT PROTEIN BS20C"/>
    <property type="match status" value="1"/>
</dbReference>
<dbReference type="Pfam" id="PF01649">
    <property type="entry name" value="Ribosomal_S20p"/>
    <property type="match status" value="1"/>
</dbReference>
<dbReference type="SUPFAM" id="SSF46992">
    <property type="entry name" value="Ribosomal protein S20"/>
    <property type="match status" value="1"/>
</dbReference>
<reference key="1">
    <citation type="journal article" date="2003" name="Nucleic Acids Res.">
        <title>Genome sequence of Chlamydophila caviae (Chlamydia psittaci GPIC): examining the role of niche-specific genes in the evolution of the Chlamydiaceae.</title>
        <authorList>
            <person name="Read T.D."/>
            <person name="Myers G.S.A."/>
            <person name="Brunham R.C."/>
            <person name="Nelson W.C."/>
            <person name="Paulsen I.T."/>
            <person name="Heidelberg J.F."/>
            <person name="Holtzapple E.K."/>
            <person name="Khouri H.M."/>
            <person name="Federova N.B."/>
            <person name="Carty H.A."/>
            <person name="Umayam L.A."/>
            <person name="Haft D.H."/>
            <person name="Peterson J.D."/>
            <person name="Beanan M.J."/>
            <person name="White O."/>
            <person name="Salzberg S.L."/>
            <person name="Hsia R.-C."/>
            <person name="McClarty G."/>
            <person name="Rank R.G."/>
            <person name="Bavoil P.M."/>
            <person name="Fraser C.M."/>
        </authorList>
    </citation>
    <scope>NUCLEOTIDE SEQUENCE [LARGE SCALE GENOMIC DNA]</scope>
    <source>
        <strain>ATCC VR-813 / DSM 19441 / 03DC25 / GPIC</strain>
    </source>
</reference>
<accession>Q821D9</accession>
<comment type="function">
    <text evidence="1">Binds directly to 16S ribosomal RNA.</text>
</comment>
<comment type="similarity">
    <text evidence="1">Belongs to the bacterial ribosomal protein bS20 family.</text>
</comment>